<reference key="1">
    <citation type="journal article" date="2010" name="Proc. Natl. Acad. Sci. U.S.A.">
        <title>Nitrosopumilus maritimus genome reveals unique mechanisms for nitrification and autotrophy in globally distributed marine crenarchaea.</title>
        <authorList>
            <person name="Walker C.B."/>
            <person name="de la Torre J.R."/>
            <person name="Klotz M.G."/>
            <person name="Urakawa H."/>
            <person name="Pinel N."/>
            <person name="Arp D.J."/>
            <person name="Brochier-Armanet C."/>
            <person name="Chain P.S."/>
            <person name="Chan P.P."/>
            <person name="Gollabgir A."/>
            <person name="Hemp J."/>
            <person name="Hugler M."/>
            <person name="Karr E.A."/>
            <person name="Konneke M."/>
            <person name="Shin M."/>
            <person name="Lawton T.J."/>
            <person name="Lowe T."/>
            <person name="Martens-Habbena W."/>
            <person name="Sayavedra-Soto L.A."/>
            <person name="Lang D."/>
            <person name="Sievert S.M."/>
            <person name="Rosenzweig A.C."/>
            <person name="Manning G."/>
            <person name="Stahl D.A."/>
        </authorList>
    </citation>
    <scope>NUCLEOTIDE SEQUENCE [LARGE SCALE GENOMIC DNA]</scope>
    <source>
        <strain>SCM1</strain>
    </source>
</reference>
<feature type="chain" id="PRO_1000147500" description="Bifunctional protein FolD">
    <location>
        <begin position="1"/>
        <end position="287"/>
    </location>
</feature>
<feature type="binding site" evidence="1">
    <location>
        <begin position="165"/>
        <end position="167"/>
    </location>
    <ligand>
        <name>NADP(+)</name>
        <dbReference type="ChEBI" id="CHEBI:58349"/>
    </ligand>
</feature>
<feature type="binding site" evidence="1">
    <location>
        <position position="190"/>
    </location>
    <ligand>
        <name>NADP(+)</name>
        <dbReference type="ChEBI" id="CHEBI:58349"/>
    </ligand>
</feature>
<feature type="binding site" evidence="1">
    <location>
        <position position="233"/>
    </location>
    <ligand>
        <name>NADP(+)</name>
        <dbReference type="ChEBI" id="CHEBI:58349"/>
    </ligand>
</feature>
<gene>
    <name evidence="1" type="primary">folD</name>
    <name type="ordered locus">Nmar_1117</name>
</gene>
<dbReference type="EC" id="1.5.1.5" evidence="1"/>
<dbReference type="EC" id="3.5.4.9" evidence="1"/>
<dbReference type="EMBL" id="CP000866">
    <property type="protein sequence ID" value="ABX13013.1"/>
    <property type="molecule type" value="Genomic_DNA"/>
</dbReference>
<dbReference type="RefSeq" id="WP_012215500.1">
    <property type="nucleotide sequence ID" value="NC_010085.1"/>
</dbReference>
<dbReference type="SMR" id="A9A4N5"/>
<dbReference type="STRING" id="436308.Nmar_1117"/>
<dbReference type="EnsemblBacteria" id="ABX13013">
    <property type="protein sequence ID" value="ABX13013"/>
    <property type="gene ID" value="Nmar_1117"/>
</dbReference>
<dbReference type="GeneID" id="5774534"/>
<dbReference type="KEGG" id="nmr:Nmar_1117"/>
<dbReference type="eggNOG" id="arCOG04538">
    <property type="taxonomic scope" value="Archaea"/>
</dbReference>
<dbReference type="HOGENOM" id="CLU_034045_2_1_2"/>
<dbReference type="InParanoid" id="A9A4N5"/>
<dbReference type="OrthoDB" id="9455at2157"/>
<dbReference type="PhylomeDB" id="A9A4N5"/>
<dbReference type="UniPathway" id="UPA00193"/>
<dbReference type="Proteomes" id="UP000000792">
    <property type="component" value="Chromosome"/>
</dbReference>
<dbReference type="GO" id="GO:0005829">
    <property type="term" value="C:cytosol"/>
    <property type="evidence" value="ECO:0000318"/>
    <property type="project" value="GO_Central"/>
</dbReference>
<dbReference type="GO" id="GO:0004477">
    <property type="term" value="F:methenyltetrahydrofolate cyclohydrolase activity"/>
    <property type="evidence" value="ECO:0000318"/>
    <property type="project" value="GO_Central"/>
</dbReference>
<dbReference type="GO" id="GO:0004488">
    <property type="term" value="F:methylenetetrahydrofolate dehydrogenase (NADP+) activity"/>
    <property type="evidence" value="ECO:0000318"/>
    <property type="project" value="GO_Central"/>
</dbReference>
<dbReference type="GO" id="GO:0000105">
    <property type="term" value="P:L-histidine biosynthetic process"/>
    <property type="evidence" value="ECO:0007669"/>
    <property type="project" value="UniProtKB-KW"/>
</dbReference>
<dbReference type="GO" id="GO:0009086">
    <property type="term" value="P:methionine biosynthetic process"/>
    <property type="evidence" value="ECO:0007669"/>
    <property type="project" value="UniProtKB-KW"/>
</dbReference>
<dbReference type="GO" id="GO:0006164">
    <property type="term" value="P:purine nucleotide biosynthetic process"/>
    <property type="evidence" value="ECO:0007669"/>
    <property type="project" value="UniProtKB-KW"/>
</dbReference>
<dbReference type="GO" id="GO:0035999">
    <property type="term" value="P:tetrahydrofolate interconversion"/>
    <property type="evidence" value="ECO:0000318"/>
    <property type="project" value="GO_Central"/>
</dbReference>
<dbReference type="CDD" id="cd01080">
    <property type="entry name" value="NAD_bind_m-THF_DH_Cyclohyd"/>
    <property type="match status" value="1"/>
</dbReference>
<dbReference type="FunFam" id="3.40.50.720:FF:000094">
    <property type="entry name" value="Bifunctional protein FolD"/>
    <property type="match status" value="1"/>
</dbReference>
<dbReference type="FunFam" id="3.40.50.10860:FF:000005">
    <property type="entry name" value="C-1-tetrahydrofolate synthase, cytoplasmic, putative"/>
    <property type="match status" value="1"/>
</dbReference>
<dbReference type="Gene3D" id="3.40.50.10860">
    <property type="entry name" value="Leucine Dehydrogenase, chain A, domain 1"/>
    <property type="match status" value="1"/>
</dbReference>
<dbReference type="Gene3D" id="3.40.50.720">
    <property type="entry name" value="NAD(P)-binding Rossmann-like Domain"/>
    <property type="match status" value="1"/>
</dbReference>
<dbReference type="HAMAP" id="MF_01576">
    <property type="entry name" value="THF_DHG_CYH"/>
    <property type="match status" value="1"/>
</dbReference>
<dbReference type="InterPro" id="IPR046346">
    <property type="entry name" value="Aminoacid_DH-like_N_sf"/>
</dbReference>
<dbReference type="InterPro" id="IPR036291">
    <property type="entry name" value="NAD(P)-bd_dom_sf"/>
</dbReference>
<dbReference type="InterPro" id="IPR000672">
    <property type="entry name" value="THF_DH/CycHdrlase"/>
</dbReference>
<dbReference type="InterPro" id="IPR020630">
    <property type="entry name" value="THF_DH/CycHdrlase_cat_dom"/>
</dbReference>
<dbReference type="InterPro" id="IPR020867">
    <property type="entry name" value="THF_DH/CycHdrlase_CS"/>
</dbReference>
<dbReference type="InterPro" id="IPR020631">
    <property type="entry name" value="THF_DH/CycHdrlase_NAD-bd_dom"/>
</dbReference>
<dbReference type="PANTHER" id="PTHR48099:SF5">
    <property type="entry name" value="C-1-TETRAHYDROFOLATE SYNTHASE, CYTOPLASMIC"/>
    <property type="match status" value="1"/>
</dbReference>
<dbReference type="PANTHER" id="PTHR48099">
    <property type="entry name" value="C-1-TETRAHYDROFOLATE SYNTHASE, CYTOPLASMIC-RELATED"/>
    <property type="match status" value="1"/>
</dbReference>
<dbReference type="Pfam" id="PF00763">
    <property type="entry name" value="THF_DHG_CYH"/>
    <property type="match status" value="1"/>
</dbReference>
<dbReference type="Pfam" id="PF02882">
    <property type="entry name" value="THF_DHG_CYH_C"/>
    <property type="match status" value="1"/>
</dbReference>
<dbReference type="PRINTS" id="PR00085">
    <property type="entry name" value="THFDHDRGNASE"/>
</dbReference>
<dbReference type="SUPFAM" id="SSF53223">
    <property type="entry name" value="Aminoacid dehydrogenase-like, N-terminal domain"/>
    <property type="match status" value="1"/>
</dbReference>
<dbReference type="SUPFAM" id="SSF51735">
    <property type="entry name" value="NAD(P)-binding Rossmann-fold domains"/>
    <property type="match status" value="1"/>
</dbReference>
<dbReference type="PROSITE" id="PS00767">
    <property type="entry name" value="THF_DHG_CYH_2"/>
    <property type="match status" value="1"/>
</dbReference>
<protein>
    <recommendedName>
        <fullName evidence="1">Bifunctional protein FolD</fullName>
    </recommendedName>
    <domain>
        <recommendedName>
            <fullName evidence="1">Methylenetetrahydrofolate dehydrogenase</fullName>
            <ecNumber evidence="1">1.5.1.5</ecNumber>
        </recommendedName>
    </domain>
    <domain>
        <recommendedName>
            <fullName evidence="1">Methenyltetrahydrofolate cyclohydrolase</fullName>
            <ecNumber evidence="1">3.5.4.9</ecNumber>
        </recommendedName>
    </domain>
</protein>
<name>FOLD_NITMS</name>
<sequence>MTGTKIDGKVISQSVKDRVKKAVEELKNQGINPCLATVLVGDNPASATYVRNKHRACEEVGITTKDHKLDASTTQAQLNEIIENLNNDNSVHGILVQLPLPEQLDEFTTTSRISPLKDVDGLTPHNAGLLAMKKAALVACTPSGVMEMFDYHGIELEGKNIVLINRSNLVGKPLYHLLLDKNATVITCHSRTKNLVELCQSADIIITAVGDRNKFTLTSDMIKEGAIVIDVAISRFQEKLVGDADYEDIIQKASFATPVPGGVGPMTVAMLLKNTITAASLSSQIGK</sequence>
<accession>A9A4N5</accession>
<keyword id="KW-0028">Amino-acid biosynthesis</keyword>
<keyword id="KW-0368">Histidine biosynthesis</keyword>
<keyword id="KW-0378">Hydrolase</keyword>
<keyword id="KW-0486">Methionine biosynthesis</keyword>
<keyword id="KW-0511">Multifunctional enzyme</keyword>
<keyword id="KW-0521">NADP</keyword>
<keyword id="KW-0554">One-carbon metabolism</keyword>
<keyword id="KW-0560">Oxidoreductase</keyword>
<keyword id="KW-0658">Purine biosynthesis</keyword>
<keyword id="KW-1185">Reference proteome</keyword>
<proteinExistence type="inferred from homology"/>
<evidence type="ECO:0000255" key="1">
    <source>
        <dbReference type="HAMAP-Rule" id="MF_01576"/>
    </source>
</evidence>
<organism>
    <name type="scientific">Nitrosopumilus maritimus (strain SCM1)</name>
    <dbReference type="NCBI Taxonomy" id="436308"/>
    <lineage>
        <taxon>Archaea</taxon>
        <taxon>Nitrososphaerota</taxon>
        <taxon>Nitrososphaeria</taxon>
        <taxon>Nitrosopumilales</taxon>
        <taxon>Nitrosopumilaceae</taxon>
        <taxon>Nitrosopumilus</taxon>
    </lineage>
</organism>
<comment type="function">
    <text evidence="1">Catalyzes the oxidation of 5,10-methylenetetrahydrofolate to 5,10-methenyltetrahydrofolate and then the hydrolysis of 5,10-methenyltetrahydrofolate to 10-formyltetrahydrofolate.</text>
</comment>
<comment type="catalytic activity">
    <reaction evidence="1">
        <text>(6R)-5,10-methylene-5,6,7,8-tetrahydrofolate + NADP(+) = (6R)-5,10-methenyltetrahydrofolate + NADPH</text>
        <dbReference type="Rhea" id="RHEA:22812"/>
        <dbReference type="ChEBI" id="CHEBI:15636"/>
        <dbReference type="ChEBI" id="CHEBI:57455"/>
        <dbReference type="ChEBI" id="CHEBI:57783"/>
        <dbReference type="ChEBI" id="CHEBI:58349"/>
        <dbReference type="EC" id="1.5.1.5"/>
    </reaction>
</comment>
<comment type="catalytic activity">
    <reaction evidence="1">
        <text>(6R)-5,10-methenyltetrahydrofolate + H2O = (6R)-10-formyltetrahydrofolate + H(+)</text>
        <dbReference type="Rhea" id="RHEA:23700"/>
        <dbReference type="ChEBI" id="CHEBI:15377"/>
        <dbReference type="ChEBI" id="CHEBI:15378"/>
        <dbReference type="ChEBI" id="CHEBI:57455"/>
        <dbReference type="ChEBI" id="CHEBI:195366"/>
        <dbReference type="EC" id="3.5.4.9"/>
    </reaction>
</comment>
<comment type="pathway">
    <text evidence="1">One-carbon metabolism; tetrahydrofolate interconversion.</text>
</comment>
<comment type="subunit">
    <text evidence="1">Homodimer.</text>
</comment>
<comment type="similarity">
    <text evidence="1">Belongs to the tetrahydrofolate dehydrogenase/cyclohydrolase family.</text>
</comment>